<proteinExistence type="inferred from homology"/>
<dbReference type="EMBL" id="AM167904">
    <property type="protein sequence ID" value="CAJ49817.1"/>
    <property type="molecule type" value="Genomic_DNA"/>
</dbReference>
<dbReference type="RefSeq" id="WP_012417869.1">
    <property type="nucleotide sequence ID" value="NC_010645.1"/>
</dbReference>
<dbReference type="SMR" id="Q2KYW0"/>
<dbReference type="STRING" id="360910.BAV2207"/>
<dbReference type="GeneID" id="92934732"/>
<dbReference type="KEGG" id="bav:BAV2207"/>
<dbReference type="eggNOG" id="COG0217">
    <property type="taxonomic scope" value="Bacteria"/>
</dbReference>
<dbReference type="HOGENOM" id="CLU_062974_2_2_4"/>
<dbReference type="OrthoDB" id="9781053at2"/>
<dbReference type="Proteomes" id="UP000001977">
    <property type="component" value="Chromosome"/>
</dbReference>
<dbReference type="GO" id="GO:0005829">
    <property type="term" value="C:cytosol"/>
    <property type="evidence" value="ECO:0007669"/>
    <property type="project" value="TreeGrafter"/>
</dbReference>
<dbReference type="GO" id="GO:0003677">
    <property type="term" value="F:DNA binding"/>
    <property type="evidence" value="ECO:0007669"/>
    <property type="project" value="UniProtKB-UniRule"/>
</dbReference>
<dbReference type="GO" id="GO:0006355">
    <property type="term" value="P:regulation of DNA-templated transcription"/>
    <property type="evidence" value="ECO:0007669"/>
    <property type="project" value="UniProtKB-UniRule"/>
</dbReference>
<dbReference type="FunFam" id="1.10.10.200:FF:000001">
    <property type="entry name" value="Probable transcriptional regulatory protein YebC"/>
    <property type="match status" value="1"/>
</dbReference>
<dbReference type="Gene3D" id="1.10.10.200">
    <property type="match status" value="1"/>
</dbReference>
<dbReference type="Gene3D" id="3.30.70.980">
    <property type="match status" value="2"/>
</dbReference>
<dbReference type="HAMAP" id="MF_00693">
    <property type="entry name" value="Transcrip_reg_TACO1"/>
    <property type="match status" value="1"/>
</dbReference>
<dbReference type="InterPro" id="IPR017856">
    <property type="entry name" value="Integrase-like_N"/>
</dbReference>
<dbReference type="InterPro" id="IPR048300">
    <property type="entry name" value="TACO1_YebC-like_2nd/3rd_dom"/>
</dbReference>
<dbReference type="InterPro" id="IPR049083">
    <property type="entry name" value="TACO1_YebC_N"/>
</dbReference>
<dbReference type="InterPro" id="IPR002876">
    <property type="entry name" value="Transcrip_reg_TACO1-like"/>
</dbReference>
<dbReference type="InterPro" id="IPR026564">
    <property type="entry name" value="Transcrip_reg_TACO1-like_dom3"/>
</dbReference>
<dbReference type="InterPro" id="IPR029072">
    <property type="entry name" value="YebC-like"/>
</dbReference>
<dbReference type="NCBIfam" id="NF001030">
    <property type="entry name" value="PRK00110.1"/>
    <property type="match status" value="1"/>
</dbReference>
<dbReference type="NCBIfam" id="NF009044">
    <property type="entry name" value="PRK12378.1"/>
    <property type="match status" value="1"/>
</dbReference>
<dbReference type="NCBIfam" id="TIGR01033">
    <property type="entry name" value="YebC/PmpR family DNA-binding transcriptional regulator"/>
    <property type="match status" value="1"/>
</dbReference>
<dbReference type="PANTHER" id="PTHR12532:SF6">
    <property type="entry name" value="TRANSCRIPTIONAL REGULATORY PROTEIN YEBC-RELATED"/>
    <property type="match status" value="1"/>
</dbReference>
<dbReference type="PANTHER" id="PTHR12532">
    <property type="entry name" value="TRANSLATIONAL ACTIVATOR OF CYTOCHROME C OXIDASE 1"/>
    <property type="match status" value="1"/>
</dbReference>
<dbReference type="Pfam" id="PF20772">
    <property type="entry name" value="TACO1_YebC_N"/>
    <property type="match status" value="1"/>
</dbReference>
<dbReference type="Pfam" id="PF01709">
    <property type="entry name" value="Transcrip_reg"/>
    <property type="match status" value="1"/>
</dbReference>
<dbReference type="SUPFAM" id="SSF75625">
    <property type="entry name" value="YebC-like"/>
    <property type="match status" value="1"/>
</dbReference>
<comment type="subcellular location">
    <subcellularLocation>
        <location evidence="1">Cytoplasm</location>
    </subcellularLocation>
</comment>
<comment type="similarity">
    <text evidence="1">Belongs to the TACO1 family.</text>
</comment>
<evidence type="ECO:0000255" key="1">
    <source>
        <dbReference type="HAMAP-Rule" id="MF_00693"/>
    </source>
</evidence>
<evidence type="ECO:0000256" key="2">
    <source>
        <dbReference type="SAM" id="MobiDB-lite"/>
    </source>
</evidence>
<gene>
    <name type="ordered locus">BAV2207</name>
</gene>
<reference key="1">
    <citation type="journal article" date="2006" name="J. Bacteriol.">
        <title>Comparison of the genome sequence of the poultry pathogen Bordetella avium with those of B. bronchiseptica, B. pertussis, and B. parapertussis reveals extensive diversity in surface structures associated with host interaction.</title>
        <authorList>
            <person name="Sebaihia M."/>
            <person name="Preston A."/>
            <person name="Maskell D.J."/>
            <person name="Kuzmiak H."/>
            <person name="Connell T.D."/>
            <person name="King N.D."/>
            <person name="Orndorff P.E."/>
            <person name="Miyamoto D.M."/>
            <person name="Thomson N.R."/>
            <person name="Harris D."/>
            <person name="Goble A."/>
            <person name="Lord A."/>
            <person name="Murphy L."/>
            <person name="Quail M.A."/>
            <person name="Rutter S."/>
            <person name="Squares R."/>
            <person name="Squares S."/>
            <person name="Woodward J."/>
            <person name="Parkhill J."/>
            <person name="Temple L.M."/>
        </authorList>
    </citation>
    <scope>NUCLEOTIDE SEQUENCE [LARGE SCALE GENOMIC DNA]</scope>
    <source>
        <strain>197N</strain>
    </source>
</reference>
<sequence length="243" mass="26231">MAGHSKWANIQHRKGRQDAKRGKLWTKIIREITVAARAGGADPDSNPRLRLAWDKATDANMPKDNVQRAIQRGAGGADGDNYEEVRYEGYGIGGAAVIVDCMTDNRTRTVAEVRHAFAKNGGNLGQEGSVAFMFKHCGQFLFAPGSSEDKVMEVALDAGAEDVITDDEGGIEVICAPADYPALRQAFEAAGLKAEVDAVIMKAQSETELTGDDAIKMQKLLDALEGLDDVQEVYTNVVFDEAQ</sequence>
<name>Y2207_BORA1</name>
<accession>Q2KYW0</accession>
<organism>
    <name type="scientific">Bordetella avium (strain 197N)</name>
    <dbReference type="NCBI Taxonomy" id="360910"/>
    <lineage>
        <taxon>Bacteria</taxon>
        <taxon>Pseudomonadati</taxon>
        <taxon>Pseudomonadota</taxon>
        <taxon>Betaproteobacteria</taxon>
        <taxon>Burkholderiales</taxon>
        <taxon>Alcaligenaceae</taxon>
        <taxon>Bordetella</taxon>
    </lineage>
</organism>
<protein>
    <recommendedName>
        <fullName evidence="1">Probable transcriptional regulatory protein BAV2207</fullName>
    </recommendedName>
</protein>
<feature type="chain" id="PRO_0000257033" description="Probable transcriptional regulatory protein BAV2207">
    <location>
        <begin position="1"/>
        <end position="243"/>
    </location>
</feature>
<feature type="region of interest" description="Disordered" evidence="2">
    <location>
        <begin position="1"/>
        <end position="21"/>
    </location>
</feature>
<keyword id="KW-0963">Cytoplasm</keyword>
<keyword id="KW-0238">DNA-binding</keyword>
<keyword id="KW-1185">Reference proteome</keyword>
<keyword id="KW-0804">Transcription</keyword>
<keyword id="KW-0805">Transcription regulation</keyword>